<feature type="chain" id="PRO_0000260061" description="Polyribonucleotide nucleotidyltransferase">
    <location>
        <begin position="1"/>
        <end position="698"/>
    </location>
</feature>
<feature type="domain" description="KH" evidence="1">
    <location>
        <begin position="557"/>
        <end position="616"/>
    </location>
</feature>
<feature type="domain" description="S1 motif" evidence="1">
    <location>
        <begin position="626"/>
        <end position="694"/>
    </location>
</feature>
<feature type="binding site" evidence="1">
    <location>
        <position position="490"/>
    </location>
    <ligand>
        <name>Mg(2+)</name>
        <dbReference type="ChEBI" id="CHEBI:18420"/>
    </ligand>
</feature>
<feature type="binding site" evidence="1">
    <location>
        <position position="496"/>
    </location>
    <ligand>
        <name>Mg(2+)</name>
        <dbReference type="ChEBI" id="CHEBI:18420"/>
    </ligand>
</feature>
<accession>Q2FHG4</accession>
<proteinExistence type="inferred from homology"/>
<keyword id="KW-0963">Cytoplasm</keyword>
<keyword id="KW-0460">Magnesium</keyword>
<keyword id="KW-0479">Metal-binding</keyword>
<keyword id="KW-0548">Nucleotidyltransferase</keyword>
<keyword id="KW-0694">RNA-binding</keyword>
<keyword id="KW-0808">Transferase</keyword>
<reference key="1">
    <citation type="journal article" date="2006" name="Lancet">
        <title>Complete genome sequence of USA300, an epidemic clone of community-acquired meticillin-resistant Staphylococcus aureus.</title>
        <authorList>
            <person name="Diep B.A."/>
            <person name="Gill S.R."/>
            <person name="Chang R.F."/>
            <person name="Phan T.H."/>
            <person name="Chen J.H."/>
            <person name="Davidson M.G."/>
            <person name="Lin F."/>
            <person name="Lin J."/>
            <person name="Carleton H.A."/>
            <person name="Mongodin E.F."/>
            <person name="Sensabaugh G.F."/>
            <person name="Perdreau-Remington F."/>
        </authorList>
    </citation>
    <scope>NUCLEOTIDE SEQUENCE [LARGE SCALE GENOMIC DNA]</scope>
    <source>
        <strain>USA300</strain>
    </source>
</reference>
<dbReference type="EC" id="2.7.7.8" evidence="1"/>
<dbReference type="EMBL" id="CP000255">
    <property type="protein sequence ID" value="ABD21358.1"/>
    <property type="molecule type" value="Genomic_DNA"/>
</dbReference>
<dbReference type="RefSeq" id="WP_000076690.1">
    <property type="nucleotide sequence ID" value="NZ_CP027476.1"/>
</dbReference>
<dbReference type="SMR" id="Q2FHG4"/>
<dbReference type="KEGG" id="saa:SAUSA300_1167"/>
<dbReference type="HOGENOM" id="CLU_004217_2_2_9"/>
<dbReference type="OMA" id="RFMFHYN"/>
<dbReference type="Proteomes" id="UP000001939">
    <property type="component" value="Chromosome"/>
</dbReference>
<dbReference type="GO" id="GO:0005829">
    <property type="term" value="C:cytosol"/>
    <property type="evidence" value="ECO:0007669"/>
    <property type="project" value="TreeGrafter"/>
</dbReference>
<dbReference type="GO" id="GO:0000175">
    <property type="term" value="F:3'-5'-RNA exonuclease activity"/>
    <property type="evidence" value="ECO:0007669"/>
    <property type="project" value="TreeGrafter"/>
</dbReference>
<dbReference type="GO" id="GO:0000287">
    <property type="term" value="F:magnesium ion binding"/>
    <property type="evidence" value="ECO:0007669"/>
    <property type="project" value="UniProtKB-UniRule"/>
</dbReference>
<dbReference type="GO" id="GO:0004654">
    <property type="term" value="F:polyribonucleotide nucleotidyltransferase activity"/>
    <property type="evidence" value="ECO:0007669"/>
    <property type="project" value="UniProtKB-UniRule"/>
</dbReference>
<dbReference type="GO" id="GO:0003723">
    <property type="term" value="F:RNA binding"/>
    <property type="evidence" value="ECO:0007669"/>
    <property type="project" value="UniProtKB-UniRule"/>
</dbReference>
<dbReference type="GO" id="GO:0006402">
    <property type="term" value="P:mRNA catabolic process"/>
    <property type="evidence" value="ECO:0007669"/>
    <property type="project" value="UniProtKB-UniRule"/>
</dbReference>
<dbReference type="GO" id="GO:0006396">
    <property type="term" value="P:RNA processing"/>
    <property type="evidence" value="ECO:0007669"/>
    <property type="project" value="InterPro"/>
</dbReference>
<dbReference type="CDD" id="cd02393">
    <property type="entry name" value="KH-I_PNPase"/>
    <property type="match status" value="1"/>
</dbReference>
<dbReference type="CDD" id="cd11363">
    <property type="entry name" value="RNase_PH_PNPase_1"/>
    <property type="match status" value="1"/>
</dbReference>
<dbReference type="CDD" id="cd11364">
    <property type="entry name" value="RNase_PH_PNPase_2"/>
    <property type="match status" value="1"/>
</dbReference>
<dbReference type="CDD" id="cd04472">
    <property type="entry name" value="S1_PNPase"/>
    <property type="match status" value="1"/>
</dbReference>
<dbReference type="FunFam" id="2.40.50.140:FF:000023">
    <property type="entry name" value="Polyribonucleotide nucleotidyltransferase"/>
    <property type="match status" value="1"/>
</dbReference>
<dbReference type="FunFam" id="3.30.1370.10:FF:000001">
    <property type="entry name" value="Polyribonucleotide nucleotidyltransferase"/>
    <property type="match status" value="1"/>
</dbReference>
<dbReference type="FunFam" id="3.30.230.70:FF:000001">
    <property type="entry name" value="Polyribonucleotide nucleotidyltransferase"/>
    <property type="match status" value="1"/>
</dbReference>
<dbReference type="FunFam" id="3.30.230.70:FF:000002">
    <property type="entry name" value="Polyribonucleotide nucleotidyltransferase"/>
    <property type="match status" value="1"/>
</dbReference>
<dbReference type="Gene3D" id="3.30.230.70">
    <property type="entry name" value="GHMP Kinase, N-terminal domain"/>
    <property type="match status" value="2"/>
</dbReference>
<dbReference type="Gene3D" id="3.30.1370.10">
    <property type="entry name" value="K Homology domain, type 1"/>
    <property type="match status" value="1"/>
</dbReference>
<dbReference type="Gene3D" id="2.40.50.140">
    <property type="entry name" value="Nucleic acid-binding proteins"/>
    <property type="match status" value="1"/>
</dbReference>
<dbReference type="HAMAP" id="MF_01595">
    <property type="entry name" value="PNPase"/>
    <property type="match status" value="1"/>
</dbReference>
<dbReference type="InterPro" id="IPR001247">
    <property type="entry name" value="ExoRNase_PH_dom1"/>
</dbReference>
<dbReference type="InterPro" id="IPR015847">
    <property type="entry name" value="ExoRNase_PH_dom2"/>
</dbReference>
<dbReference type="InterPro" id="IPR036345">
    <property type="entry name" value="ExoRNase_PH_dom2_sf"/>
</dbReference>
<dbReference type="InterPro" id="IPR004087">
    <property type="entry name" value="KH_dom"/>
</dbReference>
<dbReference type="InterPro" id="IPR004088">
    <property type="entry name" value="KH_dom_type_1"/>
</dbReference>
<dbReference type="InterPro" id="IPR036612">
    <property type="entry name" value="KH_dom_type_1_sf"/>
</dbReference>
<dbReference type="InterPro" id="IPR012340">
    <property type="entry name" value="NA-bd_OB-fold"/>
</dbReference>
<dbReference type="InterPro" id="IPR012162">
    <property type="entry name" value="PNPase"/>
</dbReference>
<dbReference type="InterPro" id="IPR027408">
    <property type="entry name" value="PNPase/RNase_PH_dom_sf"/>
</dbReference>
<dbReference type="InterPro" id="IPR015848">
    <property type="entry name" value="PNPase_PH_RNA-bd_bac/org-type"/>
</dbReference>
<dbReference type="InterPro" id="IPR036456">
    <property type="entry name" value="PNPase_PH_RNA-bd_sf"/>
</dbReference>
<dbReference type="InterPro" id="IPR020568">
    <property type="entry name" value="Ribosomal_Su5_D2-typ_SF"/>
</dbReference>
<dbReference type="InterPro" id="IPR003029">
    <property type="entry name" value="S1_domain"/>
</dbReference>
<dbReference type="NCBIfam" id="TIGR03591">
    <property type="entry name" value="polynuc_phos"/>
    <property type="match status" value="1"/>
</dbReference>
<dbReference type="NCBIfam" id="NF008805">
    <property type="entry name" value="PRK11824.1"/>
    <property type="match status" value="1"/>
</dbReference>
<dbReference type="PANTHER" id="PTHR11252">
    <property type="entry name" value="POLYRIBONUCLEOTIDE NUCLEOTIDYLTRANSFERASE"/>
    <property type="match status" value="1"/>
</dbReference>
<dbReference type="PANTHER" id="PTHR11252:SF0">
    <property type="entry name" value="POLYRIBONUCLEOTIDE NUCLEOTIDYLTRANSFERASE 1, MITOCHONDRIAL"/>
    <property type="match status" value="1"/>
</dbReference>
<dbReference type="Pfam" id="PF00013">
    <property type="entry name" value="KH_1"/>
    <property type="match status" value="1"/>
</dbReference>
<dbReference type="Pfam" id="PF03726">
    <property type="entry name" value="PNPase"/>
    <property type="match status" value="1"/>
</dbReference>
<dbReference type="Pfam" id="PF01138">
    <property type="entry name" value="RNase_PH"/>
    <property type="match status" value="2"/>
</dbReference>
<dbReference type="Pfam" id="PF03725">
    <property type="entry name" value="RNase_PH_C"/>
    <property type="match status" value="2"/>
</dbReference>
<dbReference type="Pfam" id="PF00575">
    <property type="entry name" value="S1"/>
    <property type="match status" value="1"/>
</dbReference>
<dbReference type="PIRSF" id="PIRSF005499">
    <property type="entry name" value="PNPase"/>
    <property type="match status" value="1"/>
</dbReference>
<dbReference type="SMART" id="SM00322">
    <property type="entry name" value="KH"/>
    <property type="match status" value="1"/>
</dbReference>
<dbReference type="SMART" id="SM00316">
    <property type="entry name" value="S1"/>
    <property type="match status" value="1"/>
</dbReference>
<dbReference type="SUPFAM" id="SSF54791">
    <property type="entry name" value="Eukaryotic type KH-domain (KH-domain type I)"/>
    <property type="match status" value="1"/>
</dbReference>
<dbReference type="SUPFAM" id="SSF50249">
    <property type="entry name" value="Nucleic acid-binding proteins"/>
    <property type="match status" value="1"/>
</dbReference>
<dbReference type="SUPFAM" id="SSF46915">
    <property type="entry name" value="Polynucleotide phosphorylase/guanosine pentaphosphate synthase (PNPase/GPSI), domain 3"/>
    <property type="match status" value="1"/>
</dbReference>
<dbReference type="SUPFAM" id="SSF55666">
    <property type="entry name" value="Ribonuclease PH domain 2-like"/>
    <property type="match status" value="2"/>
</dbReference>
<dbReference type="SUPFAM" id="SSF54211">
    <property type="entry name" value="Ribosomal protein S5 domain 2-like"/>
    <property type="match status" value="2"/>
</dbReference>
<dbReference type="PROSITE" id="PS50084">
    <property type="entry name" value="KH_TYPE_1"/>
    <property type="match status" value="1"/>
</dbReference>
<dbReference type="PROSITE" id="PS50126">
    <property type="entry name" value="S1"/>
    <property type="match status" value="1"/>
</dbReference>
<name>PNP_STAA3</name>
<organism>
    <name type="scientific">Staphylococcus aureus (strain USA300)</name>
    <dbReference type="NCBI Taxonomy" id="367830"/>
    <lineage>
        <taxon>Bacteria</taxon>
        <taxon>Bacillati</taxon>
        <taxon>Bacillota</taxon>
        <taxon>Bacilli</taxon>
        <taxon>Bacillales</taxon>
        <taxon>Staphylococcaceae</taxon>
        <taxon>Staphylococcus</taxon>
    </lineage>
</organism>
<comment type="function">
    <text evidence="1">Involved in mRNA degradation. Catalyzes the phosphorolysis of single-stranded polyribonucleotides processively in the 3'- to 5'-direction.</text>
</comment>
<comment type="catalytic activity">
    <reaction evidence="1">
        <text>RNA(n+1) + phosphate = RNA(n) + a ribonucleoside 5'-diphosphate</text>
        <dbReference type="Rhea" id="RHEA:22096"/>
        <dbReference type="Rhea" id="RHEA-COMP:14527"/>
        <dbReference type="Rhea" id="RHEA-COMP:17342"/>
        <dbReference type="ChEBI" id="CHEBI:43474"/>
        <dbReference type="ChEBI" id="CHEBI:57930"/>
        <dbReference type="ChEBI" id="CHEBI:140395"/>
        <dbReference type="EC" id="2.7.7.8"/>
    </reaction>
</comment>
<comment type="cofactor">
    <cofactor evidence="1">
        <name>Mg(2+)</name>
        <dbReference type="ChEBI" id="CHEBI:18420"/>
    </cofactor>
</comment>
<comment type="subcellular location">
    <subcellularLocation>
        <location evidence="1">Cytoplasm</location>
    </subcellularLocation>
</comment>
<comment type="similarity">
    <text evidence="1">Belongs to the polyribonucleotide nucleotidyltransferase family.</text>
</comment>
<sequence>MSQEKKVFKTEWAGRSLTIETGQLAKQANGAVLVRYGDTVVLSTATASKEPRDGDFFPLTVNYEEKMYAAGKIPGGFKKREGRPGDDATLTARLIDRPIRPLFPKGYKHDVQIMNMVLSADPDCSPQMAAMIGSSMALSVSDIPFQGPIAGVNVGYIDGKYIINPTVEEKEVSRLDLEVAGHKDAVNMVEAGASEITEQEMLEAIFFGHEEIQRLVDFQQQIVDHIQPVKQEFIPAERDEALVERVKSLTEEKGLKETVLTFDKQQRDENLDNLKEEIVNEFIDEEDPENELLIKEVYAILNELVKEEVRRLIADEKIRPDGRKPDEIRPLDSEVGILPRTHGSGLFTRGQTQALSVLTLGALGDYQLIDGLGPEEEKRFMHHYNFPNFSVGETGPVRAPGRREIGHGALGERALKYIIPDTADFPYTIRIVSEVLESNGSSSQASICGSTLALMDAGVPIKAPVAGIAMGLVTREDSYTILTDIQGMEDALGDMDFKVAGTKEGITAIQMDIKIDGLTREIIEEALEQARRGRLEIMNHMLQTIDQPRTELSAYAPKVVTMTIKPDKIRDVIGPGGKKINEIIDETGVKLDIEQDGTIFIGAVDQAMINRAREIIEEITREAEVGQTYQATVKRIEKYGAFVGLFPGKDALLHISQISKNRIEKVEDVLKIGDTIEVKITEIDKQGRVNASHRALEE</sequence>
<evidence type="ECO:0000255" key="1">
    <source>
        <dbReference type="HAMAP-Rule" id="MF_01595"/>
    </source>
</evidence>
<protein>
    <recommendedName>
        <fullName evidence="1">Polyribonucleotide nucleotidyltransferase</fullName>
        <ecNumber evidence="1">2.7.7.8</ecNumber>
    </recommendedName>
    <alternativeName>
        <fullName evidence="1">Polynucleotide phosphorylase</fullName>
        <shortName evidence="1">PNPase</shortName>
    </alternativeName>
</protein>
<gene>
    <name evidence="1" type="primary">pnp</name>
    <name type="synonym">pnpA</name>
    <name type="ordered locus">SAUSA300_1167</name>
</gene>